<accession>Q54944</accession>
<accession>Q54938</accession>
<accession>Q54939</accession>
<accession>Q6UZC4</accession>
<protein>
    <recommendedName>
        <fullName>Toxin zeta</fullName>
    </recommendedName>
    <alternativeName>
        <fullName>UDP-N-acetylglucosamine kinase</fullName>
        <shortName>UNAG kinase</shortName>
        <ecNumber>2.7.1.176</ecNumber>
    </alternativeName>
</protein>
<evidence type="ECO:0000256" key="1">
    <source>
        <dbReference type="SAM" id="MobiDB-lite"/>
    </source>
</evidence>
<evidence type="ECO:0000269" key="2">
    <source>
    </source>
</evidence>
<evidence type="ECO:0000269" key="3">
    <source>
    </source>
</evidence>
<evidence type="ECO:0000269" key="4">
    <source ref="7"/>
</evidence>
<evidence type="ECO:0000305" key="5"/>
<evidence type="ECO:0000305" key="6">
    <source>
    </source>
</evidence>
<evidence type="ECO:0007829" key="7">
    <source>
        <dbReference type="PDB" id="1GVN"/>
    </source>
</evidence>
<proteinExistence type="evidence at protein level"/>
<keyword id="KW-0002">3D-structure</keyword>
<keyword id="KW-0067">ATP-binding</keyword>
<keyword id="KW-0903">Direct protein sequencing</keyword>
<keyword id="KW-0418">Kinase</keyword>
<keyword id="KW-0547">Nucleotide-binding</keyword>
<keyword id="KW-0614">Plasmid</keyword>
<keyword id="KW-1277">Toxin-antitoxin system</keyword>
<keyword id="KW-0808">Transferase</keyword>
<comment type="function">
    <text evidence="4">Toxic component of a type II toxin-antitoxin (TA) system. Phosphorylates UDP-N-acetyl-D-glucosamine (UNAG) on the 3'-hydroxyl group of the N-acetyl-D-glucosamine moiety, yielding UNAG-3P. UNAG-3P inhibits MurA, the first committed step in cell wall synthesis, which is then blocked. Phosphorylation is inhibited by cognate epsilon antitoxin. Part of a postsegregational killing (PSK) system involved in the killing of plasmid-free cells. The zeta toxin induces programmed cell death.</text>
</comment>
<comment type="catalytic activity">
    <reaction>
        <text>UDP-N-acetyl-alpha-D-glucosamine + ATP = UDP-N-acetyl-alpha-D-glucosamine 3'-phosphate + ADP + H(+)</text>
        <dbReference type="Rhea" id="RHEA:32671"/>
        <dbReference type="ChEBI" id="CHEBI:15378"/>
        <dbReference type="ChEBI" id="CHEBI:30616"/>
        <dbReference type="ChEBI" id="CHEBI:57705"/>
        <dbReference type="ChEBI" id="CHEBI:64353"/>
        <dbReference type="ChEBI" id="CHEBI:456216"/>
        <dbReference type="EC" id="2.7.1.176"/>
    </reaction>
</comment>
<comment type="subunit">
    <text evidence="4">In the presence of the epsilon antitoxin forms an inactive PezA(2)PezT(2) heterotetramer. The heterotetramer is still able to bind the UNAG substrate.</text>
</comment>
<comment type="interaction">
    <interactant intactId="EBI-6407265">
        <id>Q54944</id>
    </interactant>
    <interactant intactId="EBI-6407271">
        <id>Q57231</id>
    </interactant>
    <organismsDiffer>false</organismsDiffer>
    <experiments>4</experiments>
</comment>
<comment type="miscellaneous">
    <text>Has a long half-life in vivo.</text>
</comment>
<comment type="similarity">
    <text evidence="5">Belongs to the zeta toxin family.</text>
</comment>
<reference key="1">
    <citation type="journal article" date="1993" name="Gene">
        <title>Analysis of the stabilization system of pSM19035-derived plasmid pBT233 in Bacillus subtilis.</title>
        <authorList>
            <person name="Ceglowski P."/>
            <person name="Boitsov A."/>
            <person name="Chai S."/>
            <person name="Alonso J.C."/>
        </authorList>
    </citation>
    <scope>NUCLEOTIDE SEQUENCE [GENOMIC DNA]</scope>
    <source>
        <plasmid>pBT233</plasmid>
    </source>
</reference>
<reference key="2">
    <citation type="journal article" date="1994" name="Gene">
        <title>Gene organization of the Streptococcus pyogenes plasmid pDB101: sequence analysis of the orf eta-copS region.</title>
        <authorList>
            <person name="Ceglowski P."/>
            <person name="Alonso J.C."/>
        </authorList>
    </citation>
    <scope>NUCLEOTIDE SEQUENCE [GENOMIC DNA]</scope>
    <source>
        <plasmid>pSM19035</plasmid>
    </source>
</reference>
<reference key="3">
    <citation type="submission" date="2003-07" db="EMBL/GenBank/DDBJ databases">
        <title>Nucleotide sequence of the small EcoRI fragment of Streptococcus pyogenes plasmid pSM19035.</title>
        <authorList>
            <person name="Kern-Zdanowicz I."/>
            <person name="Zienkiewicz M."/>
            <person name="Ceglowski P."/>
        </authorList>
    </citation>
    <scope>NUCLEOTIDE SEQUENCE [GENOMIC DNA]</scope>
    <source>
        <plasmid>pSM19035</plasmid>
    </source>
</reference>
<reference key="4">
    <citation type="journal article" date="2002" name="Biol. Chem.">
        <title>In vitro and in vivo stability of the epsilon2zeta2 protein complex of the broad host-range Streptococcus pyogenes pSM19035 addiction system.</title>
        <authorList>
            <person name="Camacho A.G."/>
            <person name="Misselwitz R."/>
            <person name="Behlke J."/>
            <person name="Ayora S."/>
            <person name="Welfle K."/>
            <person name="Meinhart A."/>
            <person name="Lara B."/>
            <person name="Saenger W."/>
            <person name="Welfle H."/>
            <person name="Alonso J.C."/>
        </authorList>
    </citation>
    <scope>PROTEIN SEQUENCE OF 2-10</scope>
    <scope>CHARACTERIZATION</scope>
    <source>
        <plasmid>pSM19035</plasmid>
    </source>
</reference>
<reference key="5">
    <citation type="journal article" date="2001" name="Acta Crystallogr. D">
        <title>Crystallization and preliminary X-ray diffraction studies of the epsilon zeta addiction system encoded by Streptococcus pyogenes plasmid pSM19035.</title>
        <authorList>
            <person name="Meinhart A."/>
            <person name="Alings C."/>
            <person name="Straeter N."/>
            <person name="Camacho A.G."/>
            <person name="Alonso J.C."/>
            <person name="Saenger W."/>
        </authorList>
    </citation>
    <scope>CRYSTALLIZATION</scope>
    <source>
        <plasmid>pSM19035</plasmid>
    </source>
</reference>
<reference key="6">
    <citation type="journal article" date="2003" name="Proc. Natl. Acad. Sci. U.S.A.">
        <title>Crystal structure of the plasmid maintenance system epsilon/zeta: Functional mechanism of toxin zeta and inactivation by epsilon2zeta2 complex formation.</title>
        <authorList>
            <person name="Meinhart A."/>
            <person name="Alonso J.C."/>
            <person name="Straeter N."/>
            <person name="Saenger W."/>
        </authorList>
    </citation>
    <scope>X-RAY CRYSTALLOGRAPHY (1.95 ANGSTROMS)</scope>
    <scope>MUTAGENESIS OF LYS-46; ASP-67; ARG-158 AND ARG-171</scope>
    <source>
        <plasmid>pSM19035</plasmid>
    </source>
</reference>
<reference key="7">
    <citation type="journal article" date="2011" name="PLoS Biol.">
        <title>A novel mechanism of programmed cell death in bacteria by toxin-antitoxin systems corrupts peptidoglycan synthesis.</title>
        <authorList>
            <person name="Mutschler H."/>
            <person name="Gebhardt M."/>
            <person name="Shoeman R.L."/>
            <person name="Meinhart A."/>
        </authorList>
    </citation>
    <scope>X-RAY CRYSTALLOGRAPHY (2.7 ANGSTROMS) IN COMPLEX WITH EPSILON ANTITOXIN AND UNAG</scope>
    <scope>EXPRESSION IN E.COLI</scope>
    <scope>FUNCTION AS A UNAG KINASE</scope>
    <source>
        <plasmid>pSM19035</plasmid>
    </source>
</reference>
<sequence length="287" mass="32404">MANIVNFTDKQFENRLNDNLEELIQGKKAVESPTAFLLGGQPGSGKTSLRSAIFEETQGNVIVIDNDTFKQQHPNFDELVKLYEKDVVKHVTPYSNRMTEAIISRLSDQGYNLVIEGTGRTTDVPIQTATMLQAKGYETKMYVMAVPKINSYLGTIERYETMYADDPMTARATPKQAHDIVVKNLPTNLETLHKTGLFSDIRLYNREGVKLYSSLETPSISPKETLEKELNRKVSGKEIQPTLERIEQKMVLNKHQETPEFKAIQQKLESLQPPTPPIPKTPKLPGI</sequence>
<name>ZTOX_STRPY</name>
<dbReference type="EC" id="2.7.1.176"/>
<dbReference type="EMBL" id="X64695">
    <property type="protein sequence ID" value="CAA45934.1"/>
    <property type="molecule type" value="Genomic_DNA"/>
</dbReference>
<dbReference type="EMBL" id="AY357120">
    <property type="protein sequence ID" value="AAR27199.1"/>
    <property type="molecule type" value="Genomic_DNA"/>
</dbReference>
<dbReference type="EMBL" id="X66468">
    <property type="protein sequence ID" value="CAA47091.1"/>
    <property type="molecule type" value="Genomic_DNA"/>
</dbReference>
<dbReference type="EMBL" id="AY357120">
    <property type="protein sequence ID" value="AAR27200.1"/>
    <property type="molecule type" value="Genomic_DNA"/>
</dbReference>
<dbReference type="EMBL" id="X66468">
    <property type="protein sequence ID" value="CAA47092.1"/>
    <property type="molecule type" value="Genomic_DNA"/>
</dbReference>
<dbReference type="PIR" id="S45085">
    <property type="entry name" value="S45085"/>
</dbReference>
<dbReference type="RefSeq" id="WP_001284311.1">
    <property type="nucleotide sequence ID" value="NZ_JBIEMJ010000015.1"/>
</dbReference>
<dbReference type="RefSeq" id="YP_232738.1">
    <property type="nucleotide sequence ID" value="NC_006978.1"/>
</dbReference>
<dbReference type="RefSeq" id="YP_232741.1">
    <property type="nucleotide sequence ID" value="NC_006978.1"/>
</dbReference>
<dbReference type="RefSeq" id="YP_232759.1">
    <property type="nucleotide sequence ID" value="NC_006979.1"/>
</dbReference>
<dbReference type="RefSeq" id="YP_232762.1">
    <property type="nucleotide sequence ID" value="NC_006979.1"/>
</dbReference>
<dbReference type="PDB" id="1GVN">
    <property type="method" value="X-ray"/>
    <property type="resolution" value="1.95 A"/>
    <property type="chains" value="B/D=1-287"/>
</dbReference>
<dbReference type="PDB" id="3Q8X">
    <property type="method" value="X-ray"/>
    <property type="resolution" value="2.70 A"/>
    <property type="chains" value="B/D=1-287"/>
</dbReference>
<dbReference type="PDBsum" id="1GVN"/>
<dbReference type="PDBsum" id="3Q8X"/>
<dbReference type="SMR" id="Q54944"/>
<dbReference type="DIP" id="DIP-58969N"/>
<dbReference type="IntAct" id="Q54944">
    <property type="interactions" value="1"/>
</dbReference>
<dbReference type="GeneID" id="8149053"/>
<dbReference type="BRENDA" id="2.7.1.176">
    <property type="organism ID" value="5935"/>
</dbReference>
<dbReference type="EvolutionaryTrace" id="Q54944"/>
<dbReference type="GO" id="GO:0005524">
    <property type="term" value="F:ATP binding"/>
    <property type="evidence" value="ECO:0007669"/>
    <property type="project" value="UniProtKB-KW"/>
</dbReference>
<dbReference type="GO" id="GO:0016301">
    <property type="term" value="F:kinase activity"/>
    <property type="evidence" value="ECO:0007669"/>
    <property type="project" value="UniProtKB-KW"/>
</dbReference>
<dbReference type="Gene3D" id="3.40.50.300">
    <property type="entry name" value="P-loop containing nucleotide triphosphate hydrolases"/>
    <property type="match status" value="1"/>
</dbReference>
<dbReference type="InterPro" id="IPR027417">
    <property type="entry name" value="P-loop_NTPase"/>
</dbReference>
<dbReference type="InterPro" id="IPR010488">
    <property type="entry name" value="Zeta_toxin_domain"/>
</dbReference>
<dbReference type="Pfam" id="PF06414">
    <property type="entry name" value="Zeta_toxin"/>
    <property type="match status" value="1"/>
</dbReference>
<dbReference type="SUPFAM" id="SSF52540">
    <property type="entry name" value="P-loop containing nucleoside triphosphate hydrolases"/>
    <property type="match status" value="1"/>
</dbReference>
<geneLocation type="plasmid">
    <name>pBT233</name>
</geneLocation>
<geneLocation type="plasmid">
    <name>pSM19035</name>
</geneLocation>
<feature type="initiator methionine" description="Removed" evidence="2">
    <location>
        <position position="1"/>
    </location>
</feature>
<feature type="chain" id="PRO_0000221554" description="Toxin zeta">
    <location>
        <begin position="2"/>
        <end position="287"/>
    </location>
</feature>
<feature type="region of interest" description="Disordered" evidence="1">
    <location>
        <begin position="267"/>
        <end position="287"/>
    </location>
</feature>
<feature type="compositionally biased region" description="Pro residues" evidence="1">
    <location>
        <begin position="273"/>
        <end position="287"/>
    </location>
</feature>
<feature type="active site" description="Proton acceptor" evidence="5">
    <location>
        <position position="67"/>
    </location>
</feature>
<feature type="binding site" evidence="6">
    <location>
        <begin position="40"/>
        <end position="47"/>
    </location>
    <ligand>
        <name>ATP</name>
        <dbReference type="ChEBI" id="CHEBI:30616"/>
    </ligand>
</feature>
<feature type="binding site">
    <location>
        <position position="66"/>
    </location>
    <ligand>
        <name>substrate</name>
    </ligand>
</feature>
<feature type="binding site">
    <location>
        <position position="100"/>
    </location>
    <ligand>
        <name>substrate</name>
    </ligand>
</feature>
<feature type="binding site">
    <location>
        <position position="118"/>
    </location>
    <ligand>
        <name>substrate</name>
    </ligand>
</feature>
<feature type="binding site">
    <location>
        <position position="120"/>
    </location>
    <ligand>
        <name>substrate</name>
    </ligand>
</feature>
<feature type="binding site">
    <location>
        <position position="128"/>
    </location>
    <ligand>
        <name>substrate</name>
    </ligand>
</feature>
<feature type="mutagenesis site" description="Loss of activity." evidence="3">
    <original>K</original>
    <variation>A</variation>
    <location>
        <position position="46"/>
    </location>
</feature>
<feature type="mutagenesis site" description="Loss of activity." evidence="3">
    <original>D</original>
    <variation>T</variation>
    <location>
        <position position="67"/>
    </location>
</feature>
<feature type="mutagenesis site" description="Loss of activity; when associated with S-171." evidence="3">
    <original>R</original>
    <variation>A</variation>
    <location>
        <position position="158"/>
    </location>
</feature>
<feature type="mutagenesis site" description="Loss of activity; when associated with A-158." evidence="3">
    <original>R</original>
    <variation>S</variation>
    <location>
        <position position="171"/>
    </location>
</feature>
<feature type="helix" evidence="7">
    <location>
        <begin position="9"/>
        <end position="24"/>
    </location>
</feature>
<feature type="strand" evidence="7">
    <location>
        <begin position="34"/>
        <end position="39"/>
    </location>
</feature>
<feature type="helix" evidence="7">
    <location>
        <begin position="47"/>
        <end position="56"/>
    </location>
</feature>
<feature type="turn" evidence="7">
    <location>
        <begin position="57"/>
        <end position="59"/>
    </location>
</feature>
<feature type="strand" evidence="7">
    <location>
        <begin position="62"/>
        <end position="64"/>
    </location>
</feature>
<feature type="helix" evidence="7">
    <location>
        <begin position="66"/>
        <end position="72"/>
    </location>
</feature>
<feature type="helix" evidence="7">
    <location>
        <begin position="76"/>
        <end position="83"/>
    </location>
</feature>
<feature type="helix" evidence="7">
    <location>
        <begin position="84"/>
        <end position="86"/>
    </location>
</feature>
<feature type="helix" evidence="7">
    <location>
        <begin position="88"/>
        <end position="109"/>
    </location>
</feature>
<feature type="strand" evidence="7">
    <location>
        <begin position="113"/>
        <end position="115"/>
    </location>
</feature>
<feature type="helix" evidence="7">
    <location>
        <begin position="123"/>
        <end position="133"/>
    </location>
</feature>
<feature type="turn" evidence="7">
    <location>
        <begin position="134"/>
        <end position="136"/>
    </location>
</feature>
<feature type="strand" evidence="7">
    <location>
        <begin position="138"/>
        <end position="144"/>
    </location>
</feature>
<feature type="helix" evidence="7">
    <location>
        <begin position="148"/>
        <end position="165"/>
    </location>
</feature>
<feature type="turn" evidence="7">
    <location>
        <begin position="167"/>
        <end position="169"/>
    </location>
</feature>
<feature type="helix" evidence="7">
    <location>
        <begin position="175"/>
        <end position="195"/>
    </location>
</feature>
<feature type="strand" evidence="7">
    <location>
        <begin position="201"/>
        <end position="204"/>
    </location>
</feature>
<feature type="strand" evidence="7">
    <location>
        <begin position="210"/>
        <end position="213"/>
    </location>
</feature>
<feature type="turn" evidence="7">
    <location>
        <begin position="214"/>
        <end position="216"/>
    </location>
</feature>
<feature type="helix" evidence="7">
    <location>
        <begin position="222"/>
        <end position="230"/>
    </location>
</feature>
<feature type="helix" evidence="7">
    <location>
        <begin position="236"/>
        <end position="252"/>
    </location>
</feature>
<feature type="helix" evidence="7">
    <location>
        <begin position="259"/>
        <end position="270"/>
    </location>
</feature>
<organism>
    <name type="scientific">Streptococcus pyogenes</name>
    <dbReference type="NCBI Taxonomy" id="1314"/>
    <lineage>
        <taxon>Bacteria</taxon>
        <taxon>Bacillati</taxon>
        <taxon>Bacillota</taxon>
        <taxon>Bacilli</taxon>
        <taxon>Lactobacillales</taxon>
        <taxon>Streptococcaceae</taxon>
        <taxon>Streptococcus</taxon>
    </lineage>
</organism>